<comment type="allergen">
    <text>Causes an allergic reaction in human.</text>
</comment>
<comment type="similarity">
    <text evidence="2">Belongs to the BetVI family.</text>
</comment>
<feature type="initiator methionine" description="Removed" evidence="1">
    <location>
        <position position="1"/>
    </location>
</feature>
<feature type="chain" id="PRO_0000154186" description="Major pollen allergen Car b 1 isoform 2">
    <location>
        <begin position="2"/>
        <end position="160"/>
    </location>
</feature>
<reference key="1">
    <citation type="journal article" date="1992" name="Mol. Immunol.">
        <title>PCR based cloning and sequencing of isogenes encoding the tree pollen major allergen Car b I from Carpinus betulus, hornbeam.</title>
        <authorList>
            <person name="Nedergaard Larsen J."/>
            <person name="Stroeman P."/>
            <person name="Ipsen H."/>
        </authorList>
    </citation>
    <scope>NUCLEOTIDE SEQUENCE [MRNA]</scope>
    <source>
        <tissue>Pollen</tissue>
    </source>
</reference>
<sequence>MGVFNYEAETTSVIPAARLFKAFILDGNKLIPKVSPQAVSSVENVEGNGGPGTIKKITFSEGSPVKYVKERVEEIDHTNFKYNYTVIEGDVLGDKLEKVSHELKIVAAPGGGSIVKISSKFHAKGYHEVNAEEMKGAKEMAEKLLRAVESYLLAHTAEYN</sequence>
<keyword id="KW-0020">Allergen</keyword>
<keyword id="KW-0568">Pathogenesis-related protein</keyword>
<keyword id="KW-0611">Plant defense</keyword>
<organism>
    <name type="scientific">Carpinus betulus</name>
    <name type="common">European hornbeam</name>
    <name type="synonym">Carpinus caucasica</name>
    <dbReference type="NCBI Taxonomy" id="12990"/>
    <lineage>
        <taxon>Eukaryota</taxon>
        <taxon>Viridiplantae</taxon>
        <taxon>Streptophyta</taxon>
        <taxon>Embryophyta</taxon>
        <taxon>Tracheophyta</taxon>
        <taxon>Spermatophyta</taxon>
        <taxon>Magnoliopsida</taxon>
        <taxon>eudicotyledons</taxon>
        <taxon>Gunneridae</taxon>
        <taxon>Pentapetalae</taxon>
        <taxon>rosids</taxon>
        <taxon>fabids</taxon>
        <taxon>Fagales</taxon>
        <taxon>Betulaceae</taxon>
        <taxon>Carpinus</taxon>
    </lineage>
</organism>
<proteinExistence type="evidence at protein level"/>
<dbReference type="EMBL" id="X66933">
    <property type="protein sequence ID" value="CAA47367.1"/>
    <property type="molecule type" value="mRNA"/>
</dbReference>
<dbReference type="SMR" id="P38950"/>
<dbReference type="Allergome" id="180">
    <property type="allergen name" value="Car b 1"/>
</dbReference>
<dbReference type="Allergome" id="189">
    <property type="allergen name" value="Car b 1.0201"/>
</dbReference>
<dbReference type="GO" id="GO:0005737">
    <property type="term" value="C:cytoplasm"/>
    <property type="evidence" value="ECO:0007669"/>
    <property type="project" value="TreeGrafter"/>
</dbReference>
<dbReference type="GO" id="GO:0005634">
    <property type="term" value="C:nucleus"/>
    <property type="evidence" value="ECO:0007669"/>
    <property type="project" value="TreeGrafter"/>
</dbReference>
<dbReference type="GO" id="GO:0010427">
    <property type="term" value="F:abscisic acid binding"/>
    <property type="evidence" value="ECO:0007669"/>
    <property type="project" value="InterPro"/>
</dbReference>
<dbReference type="GO" id="GO:0004864">
    <property type="term" value="F:protein phosphatase inhibitor activity"/>
    <property type="evidence" value="ECO:0007669"/>
    <property type="project" value="InterPro"/>
</dbReference>
<dbReference type="GO" id="GO:0038023">
    <property type="term" value="F:signaling receptor activity"/>
    <property type="evidence" value="ECO:0007669"/>
    <property type="project" value="InterPro"/>
</dbReference>
<dbReference type="GO" id="GO:0009738">
    <property type="term" value="P:abscisic acid-activated signaling pathway"/>
    <property type="evidence" value="ECO:0007669"/>
    <property type="project" value="InterPro"/>
</dbReference>
<dbReference type="GO" id="GO:0006952">
    <property type="term" value="P:defense response"/>
    <property type="evidence" value="ECO:0007669"/>
    <property type="project" value="UniProtKB-KW"/>
</dbReference>
<dbReference type="CDD" id="cd07816">
    <property type="entry name" value="Bet_v1-like"/>
    <property type="match status" value="1"/>
</dbReference>
<dbReference type="FunFam" id="3.30.530.20:FF:000007">
    <property type="entry name" value="Major pollen allergen Bet v 1-A"/>
    <property type="match status" value="1"/>
</dbReference>
<dbReference type="Gene3D" id="3.30.530.20">
    <property type="match status" value="1"/>
</dbReference>
<dbReference type="InterPro" id="IPR000916">
    <property type="entry name" value="Bet_v_I/MLP"/>
</dbReference>
<dbReference type="InterPro" id="IPR024949">
    <property type="entry name" value="Bet_v_I_allergen"/>
</dbReference>
<dbReference type="InterPro" id="IPR050279">
    <property type="entry name" value="Plant_def-hormone_signal"/>
</dbReference>
<dbReference type="InterPro" id="IPR023393">
    <property type="entry name" value="START-like_dom_sf"/>
</dbReference>
<dbReference type="PANTHER" id="PTHR31213">
    <property type="entry name" value="OS08G0374000 PROTEIN-RELATED"/>
    <property type="match status" value="1"/>
</dbReference>
<dbReference type="PANTHER" id="PTHR31213:SF55">
    <property type="entry name" value="STRESS-INDUCED PROTEIN SAM22"/>
    <property type="match status" value="1"/>
</dbReference>
<dbReference type="Pfam" id="PF00407">
    <property type="entry name" value="Bet_v_1"/>
    <property type="match status" value="1"/>
</dbReference>
<dbReference type="PRINTS" id="PR00634">
    <property type="entry name" value="BETALLERGEN"/>
</dbReference>
<dbReference type="SMART" id="SM01037">
    <property type="entry name" value="Bet_v_1"/>
    <property type="match status" value="1"/>
</dbReference>
<dbReference type="SUPFAM" id="SSF55961">
    <property type="entry name" value="Bet v1-like"/>
    <property type="match status" value="1"/>
</dbReference>
<dbReference type="PROSITE" id="PS00451">
    <property type="entry name" value="PATHOGENESIS_BETVI"/>
    <property type="match status" value="1"/>
</dbReference>
<accession>P38950</accession>
<evidence type="ECO:0000250" key="1"/>
<evidence type="ECO:0000305" key="2"/>
<name>MPAC2_CARBE</name>
<protein>
    <recommendedName>
        <fullName>Major pollen allergen Car b 1 isoform 2</fullName>
    </recommendedName>
    <alternativeName>
        <fullName>Allergen Car b I</fullName>
    </alternativeName>
    <allergenName>Car b 1</allergenName>
</protein>